<gene>
    <name type="primary">hofD</name>
    <name type="synonym">hopD</name>
    <name type="ordered locus">HI_0296</name>
</gene>
<feature type="chain" id="PRO_0000192633" description="Prepilin leader peptidase/N-methyltransferase">
    <location>
        <begin position="1"/>
        <end position="230"/>
    </location>
</feature>
<feature type="transmembrane region" description="Helical" evidence="2">
    <location>
        <begin position="1"/>
        <end position="21"/>
    </location>
</feature>
<feature type="transmembrane region" description="Helical" evidence="2">
    <location>
        <begin position="60"/>
        <end position="80"/>
    </location>
</feature>
<feature type="transmembrane region" description="Helical" evidence="2">
    <location>
        <begin position="84"/>
        <end position="104"/>
    </location>
</feature>
<feature type="transmembrane region" description="Helical" evidence="2">
    <location>
        <begin position="114"/>
        <end position="134"/>
    </location>
</feature>
<feature type="transmembrane region" description="Helical" evidence="2">
    <location>
        <begin position="140"/>
        <end position="160"/>
    </location>
</feature>
<feature type="transmembrane region" description="Helical" evidence="2">
    <location>
        <begin position="181"/>
        <end position="201"/>
    </location>
</feature>
<feature type="transmembrane region" description="Helical" evidence="2">
    <location>
        <begin position="208"/>
        <end position="228"/>
    </location>
</feature>
<evidence type="ECO:0000250" key="1">
    <source>
        <dbReference type="UniProtKB" id="P22610"/>
    </source>
</evidence>
<evidence type="ECO:0000255" key="2"/>
<evidence type="ECO:0000305" key="3"/>
<sequence length="230" mass="26789">MIYFTMFLLGGILGIALWFYLSGFITRLQQNIYAIYVELFPQNRSPFQPHFASIQQKKCGHILRYFFSIGVGFIFLQIAFKDSIFTVWIGLTLIILWTISYLDWHYQLISTTPCLWLLTLGLFGADNNFSLLTLSESIKSAASFFIVFYVIYWLAKFYYGKEAFGRGDYWLAMALGSFIHLETLPHFLLLASVLGICFSLIHRKKKEFLPFAPFMNLSAVIIYFVKYYGY</sequence>
<keyword id="KW-0997">Cell inner membrane</keyword>
<keyword id="KW-1003">Cell membrane</keyword>
<keyword id="KW-0378">Hydrolase</keyword>
<keyword id="KW-0472">Membrane</keyword>
<keyword id="KW-0645">Protease</keyword>
<keyword id="KW-1185">Reference proteome</keyword>
<keyword id="KW-0949">S-adenosyl-L-methionine</keyword>
<keyword id="KW-0808">Transferase</keyword>
<keyword id="KW-0812">Transmembrane</keyword>
<keyword id="KW-1133">Transmembrane helix</keyword>
<keyword id="KW-0813">Transport</keyword>
<name>LEP4_HAEIN</name>
<accession>P44620</accession>
<proteinExistence type="inferred from homology"/>
<organism>
    <name type="scientific">Haemophilus influenzae (strain ATCC 51907 / DSM 11121 / KW20 / Rd)</name>
    <dbReference type="NCBI Taxonomy" id="71421"/>
    <lineage>
        <taxon>Bacteria</taxon>
        <taxon>Pseudomonadati</taxon>
        <taxon>Pseudomonadota</taxon>
        <taxon>Gammaproteobacteria</taxon>
        <taxon>Pasteurellales</taxon>
        <taxon>Pasteurellaceae</taxon>
        <taxon>Haemophilus</taxon>
    </lineage>
</organism>
<protein>
    <recommendedName>
        <fullName>Prepilin leader peptidase/N-methyltransferase</fullName>
    </recommendedName>
    <domain>
        <recommendedName>
            <fullName>Leader peptidase</fullName>
            <ecNumber evidence="1">3.4.23.43</ecNumber>
        </recommendedName>
        <alternativeName>
            <fullName>Prepilin peptidase</fullName>
        </alternativeName>
    </domain>
    <domain>
        <recommendedName>
            <fullName>N-methyltransferase</fullName>
            <ecNumber evidence="1">2.1.1.-</ecNumber>
        </recommendedName>
    </domain>
</protein>
<dbReference type="EC" id="3.4.23.43" evidence="1"/>
<dbReference type="EC" id="2.1.1.-" evidence="1"/>
<dbReference type="EMBL" id="L42023">
    <property type="protein sequence ID" value="AAC21960.1"/>
    <property type="molecule type" value="Genomic_DNA"/>
</dbReference>
<dbReference type="PIR" id="C64060">
    <property type="entry name" value="C64060"/>
</dbReference>
<dbReference type="RefSeq" id="NP_438463.1">
    <property type="nucleotide sequence ID" value="NC_000907.1"/>
</dbReference>
<dbReference type="STRING" id="71421.HI_0296"/>
<dbReference type="EnsemblBacteria" id="AAC21960">
    <property type="protein sequence ID" value="AAC21960"/>
    <property type="gene ID" value="HI_0296"/>
</dbReference>
<dbReference type="KEGG" id="hin:HI_0296"/>
<dbReference type="PATRIC" id="fig|71421.8.peg.312"/>
<dbReference type="eggNOG" id="COG1989">
    <property type="taxonomic scope" value="Bacteria"/>
</dbReference>
<dbReference type="HOGENOM" id="CLU_105394_0_0_6"/>
<dbReference type="OrthoDB" id="5689065at2"/>
<dbReference type="PhylomeDB" id="P44620"/>
<dbReference type="BioCyc" id="HINF71421:G1GJ1-314-MONOMER"/>
<dbReference type="Proteomes" id="UP000000579">
    <property type="component" value="Chromosome"/>
</dbReference>
<dbReference type="GO" id="GO:0005886">
    <property type="term" value="C:plasma membrane"/>
    <property type="evidence" value="ECO:0000318"/>
    <property type="project" value="GO_Central"/>
</dbReference>
<dbReference type="GO" id="GO:0004190">
    <property type="term" value="F:aspartic-type endopeptidase activity"/>
    <property type="evidence" value="ECO:0000318"/>
    <property type="project" value="GO_Central"/>
</dbReference>
<dbReference type="GO" id="GO:0016740">
    <property type="term" value="F:transferase activity"/>
    <property type="evidence" value="ECO:0007669"/>
    <property type="project" value="UniProtKB-KW"/>
</dbReference>
<dbReference type="GO" id="GO:0006465">
    <property type="term" value="P:signal peptide processing"/>
    <property type="evidence" value="ECO:0000318"/>
    <property type="project" value="GO_Central"/>
</dbReference>
<dbReference type="FunFam" id="1.20.120.1220:FF:000010">
    <property type="entry name" value="Putative type 4 prepilin-like proteins leader peptide-processing enzyme"/>
    <property type="match status" value="1"/>
</dbReference>
<dbReference type="Gene3D" id="1.20.120.1220">
    <property type="match status" value="1"/>
</dbReference>
<dbReference type="InterPro" id="IPR000045">
    <property type="entry name" value="Prepilin_IV_endopep_pep"/>
</dbReference>
<dbReference type="InterPro" id="IPR050882">
    <property type="entry name" value="Prepilin_peptidase/N-MTase"/>
</dbReference>
<dbReference type="PANTHER" id="PTHR30487:SF0">
    <property type="entry name" value="PREPILIN LEADER PEPTIDASE_N-METHYLTRANSFERASE-RELATED"/>
    <property type="match status" value="1"/>
</dbReference>
<dbReference type="PANTHER" id="PTHR30487">
    <property type="entry name" value="TYPE 4 PREPILIN-LIKE PROTEINS LEADER PEPTIDE-PROCESSING ENZYME"/>
    <property type="match status" value="1"/>
</dbReference>
<dbReference type="Pfam" id="PF01478">
    <property type="entry name" value="Peptidase_A24"/>
    <property type="match status" value="1"/>
</dbReference>
<reference key="1">
    <citation type="journal article" date="1995" name="Science">
        <title>Whole-genome random sequencing and assembly of Haemophilus influenzae Rd.</title>
        <authorList>
            <person name="Fleischmann R.D."/>
            <person name="Adams M.D."/>
            <person name="White O."/>
            <person name="Clayton R.A."/>
            <person name="Kirkness E.F."/>
            <person name="Kerlavage A.R."/>
            <person name="Bult C.J."/>
            <person name="Tomb J.-F."/>
            <person name="Dougherty B.A."/>
            <person name="Merrick J.M."/>
            <person name="McKenney K."/>
            <person name="Sutton G.G."/>
            <person name="FitzHugh W."/>
            <person name="Fields C.A."/>
            <person name="Gocayne J.D."/>
            <person name="Scott J.D."/>
            <person name="Shirley R."/>
            <person name="Liu L.-I."/>
            <person name="Glodek A."/>
            <person name="Kelley J.M."/>
            <person name="Weidman J.F."/>
            <person name="Phillips C.A."/>
            <person name="Spriggs T."/>
            <person name="Hedblom E."/>
            <person name="Cotton M.D."/>
            <person name="Utterback T.R."/>
            <person name="Hanna M.C."/>
            <person name="Nguyen D.T."/>
            <person name="Saudek D.M."/>
            <person name="Brandon R.C."/>
            <person name="Fine L.D."/>
            <person name="Fritchman J.L."/>
            <person name="Fuhrmann J.L."/>
            <person name="Geoghagen N.S.M."/>
            <person name="Gnehm C.L."/>
            <person name="McDonald L.A."/>
            <person name="Small K.V."/>
            <person name="Fraser C.M."/>
            <person name="Smith H.O."/>
            <person name="Venter J.C."/>
        </authorList>
    </citation>
    <scope>NUCLEOTIDE SEQUENCE [LARGE SCALE GENOMIC DNA]</scope>
    <source>
        <strain>ATCC 51907 / DSM 11121 / KW20 / Rd</strain>
    </source>
</reference>
<comment type="function">
    <text evidence="1">Plays a role in type II pseudopili formation by proteolytically removing the leader sequence from substrate proteins and subsequently monomethylating the alpha-amino group of the newly exposed N-terminal phenylalanine. Substrates include proteins required for biogenesis of the type II general secretory apparatus.</text>
</comment>
<comment type="catalytic activity">
    <reaction evidence="1">
        <text>Typically cleaves a -Gly-|-Phe- bond to release an N-terminal, basic peptide of 5-8 residues from type IV prepilin, and then N-methylates the new N-terminal amino group, the methyl donor being S-adenosyl-L-methionine.</text>
        <dbReference type="EC" id="3.4.23.43"/>
    </reaction>
</comment>
<comment type="subcellular location">
    <subcellularLocation>
        <location evidence="1">Cell inner membrane</location>
        <topology evidence="1">Multi-pass membrane protein</topology>
    </subcellularLocation>
</comment>
<comment type="similarity">
    <text evidence="3">Belongs to the peptidase A24 family.</text>
</comment>